<evidence type="ECO:0000255" key="1">
    <source>
        <dbReference type="HAMAP-Rule" id="MF_00222"/>
    </source>
</evidence>
<comment type="function">
    <text evidence="1">Involved in the biosynthesis of the chorismate, which leads to the biosynthesis of aromatic amino acids. Catalyzes the reversible NADPH linked reduction of 3-dehydroshikimate (DHSA) to yield shikimate (SA).</text>
</comment>
<comment type="catalytic activity">
    <reaction evidence="1">
        <text>shikimate + NADP(+) = 3-dehydroshikimate + NADPH + H(+)</text>
        <dbReference type="Rhea" id="RHEA:17737"/>
        <dbReference type="ChEBI" id="CHEBI:15378"/>
        <dbReference type="ChEBI" id="CHEBI:16630"/>
        <dbReference type="ChEBI" id="CHEBI:36208"/>
        <dbReference type="ChEBI" id="CHEBI:57783"/>
        <dbReference type="ChEBI" id="CHEBI:58349"/>
        <dbReference type="EC" id="1.1.1.25"/>
    </reaction>
</comment>
<comment type="pathway">
    <text evidence="1">Metabolic intermediate biosynthesis; chorismate biosynthesis; chorismate from D-erythrose 4-phosphate and phosphoenolpyruvate: step 4/7.</text>
</comment>
<comment type="subunit">
    <text evidence="1">Homodimer.</text>
</comment>
<comment type="similarity">
    <text evidence="1">Belongs to the shikimate dehydrogenase family.</text>
</comment>
<reference key="1">
    <citation type="journal article" date="2006" name="Proc. Natl. Acad. Sci. U.S.A.">
        <title>Molecular genetic anatomy of inter- and intraserotype variation in the human bacterial pathogen group A Streptococcus.</title>
        <authorList>
            <person name="Beres S.B."/>
            <person name="Richter E.W."/>
            <person name="Nagiec M.J."/>
            <person name="Sumby P."/>
            <person name="Porcella S.F."/>
            <person name="DeLeo F.R."/>
            <person name="Musser J.M."/>
        </authorList>
    </citation>
    <scope>NUCLEOTIDE SEQUENCE [LARGE SCALE GENOMIC DNA]</scope>
    <source>
        <strain>MGAS10270</strain>
    </source>
</reference>
<feature type="chain" id="PRO_1000021348" description="Shikimate dehydrogenase (NADP(+))">
    <location>
        <begin position="1"/>
        <end position="292"/>
    </location>
</feature>
<feature type="active site" description="Proton acceptor" evidence="1">
    <location>
        <position position="73"/>
    </location>
</feature>
<feature type="binding site" evidence="1">
    <location>
        <begin position="22"/>
        <end position="24"/>
    </location>
    <ligand>
        <name>shikimate</name>
        <dbReference type="ChEBI" id="CHEBI:36208"/>
    </ligand>
</feature>
<feature type="binding site" evidence="1">
    <location>
        <position position="69"/>
    </location>
    <ligand>
        <name>shikimate</name>
        <dbReference type="ChEBI" id="CHEBI:36208"/>
    </ligand>
</feature>
<feature type="binding site" evidence="1">
    <location>
        <position position="94"/>
    </location>
    <ligand>
        <name>shikimate</name>
        <dbReference type="ChEBI" id="CHEBI:36208"/>
    </ligand>
</feature>
<feature type="binding site" evidence="1">
    <location>
        <position position="111"/>
    </location>
    <ligand>
        <name>shikimate</name>
        <dbReference type="ChEBI" id="CHEBI:36208"/>
    </ligand>
</feature>
<feature type="binding site" evidence="1">
    <location>
        <begin position="135"/>
        <end position="139"/>
    </location>
    <ligand>
        <name>NADP(+)</name>
        <dbReference type="ChEBI" id="CHEBI:58349"/>
    </ligand>
</feature>
<feature type="binding site" evidence="1">
    <location>
        <position position="236"/>
    </location>
    <ligand>
        <name>NADP(+)</name>
        <dbReference type="ChEBI" id="CHEBI:58349"/>
    </ligand>
</feature>
<feature type="binding site" evidence="1">
    <location>
        <position position="238"/>
    </location>
    <ligand>
        <name>shikimate</name>
        <dbReference type="ChEBI" id="CHEBI:36208"/>
    </ligand>
</feature>
<feature type="binding site" evidence="1">
    <location>
        <position position="260"/>
    </location>
    <ligand>
        <name>NADP(+)</name>
        <dbReference type="ChEBI" id="CHEBI:58349"/>
    </ligand>
</feature>
<protein>
    <recommendedName>
        <fullName evidence="1">Shikimate dehydrogenase (NADP(+))</fullName>
        <shortName evidence="1">SDH</shortName>
        <ecNumber evidence="1">1.1.1.25</ecNumber>
    </recommendedName>
</protein>
<keyword id="KW-0028">Amino-acid biosynthesis</keyword>
<keyword id="KW-0057">Aromatic amino acid biosynthesis</keyword>
<keyword id="KW-0521">NADP</keyword>
<keyword id="KW-0560">Oxidoreductase</keyword>
<accession>Q1JFS6</accession>
<dbReference type="EC" id="1.1.1.25" evidence="1"/>
<dbReference type="EMBL" id="CP000260">
    <property type="protein sequence ID" value="ABF34483.1"/>
    <property type="molecule type" value="Genomic_DNA"/>
</dbReference>
<dbReference type="SMR" id="Q1JFS6"/>
<dbReference type="KEGG" id="sph:MGAS10270_Spy1418"/>
<dbReference type="HOGENOM" id="CLU_044063_4_4_9"/>
<dbReference type="UniPathway" id="UPA00053">
    <property type="reaction ID" value="UER00087"/>
</dbReference>
<dbReference type="Proteomes" id="UP000002436">
    <property type="component" value="Chromosome"/>
</dbReference>
<dbReference type="GO" id="GO:0050661">
    <property type="term" value="F:NADP binding"/>
    <property type="evidence" value="ECO:0007669"/>
    <property type="project" value="InterPro"/>
</dbReference>
<dbReference type="GO" id="GO:0004764">
    <property type="term" value="F:shikimate 3-dehydrogenase (NADP+) activity"/>
    <property type="evidence" value="ECO:0007669"/>
    <property type="project" value="UniProtKB-UniRule"/>
</dbReference>
<dbReference type="GO" id="GO:0008652">
    <property type="term" value="P:amino acid biosynthetic process"/>
    <property type="evidence" value="ECO:0007669"/>
    <property type="project" value="UniProtKB-KW"/>
</dbReference>
<dbReference type="GO" id="GO:0009073">
    <property type="term" value="P:aromatic amino acid family biosynthetic process"/>
    <property type="evidence" value="ECO:0007669"/>
    <property type="project" value="UniProtKB-KW"/>
</dbReference>
<dbReference type="GO" id="GO:0009423">
    <property type="term" value="P:chorismate biosynthetic process"/>
    <property type="evidence" value="ECO:0007669"/>
    <property type="project" value="UniProtKB-UniRule"/>
</dbReference>
<dbReference type="GO" id="GO:0019632">
    <property type="term" value="P:shikimate metabolic process"/>
    <property type="evidence" value="ECO:0007669"/>
    <property type="project" value="InterPro"/>
</dbReference>
<dbReference type="CDD" id="cd01065">
    <property type="entry name" value="NAD_bind_Shikimate_DH"/>
    <property type="match status" value="1"/>
</dbReference>
<dbReference type="FunFam" id="3.40.50.10860:FF:000004">
    <property type="entry name" value="Quinate/shikimate dehydrogenase"/>
    <property type="match status" value="1"/>
</dbReference>
<dbReference type="FunFam" id="3.40.50.720:FF:000086">
    <property type="entry name" value="Quinate/shikimate dehydrogenase"/>
    <property type="match status" value="1"/>
</dbReference>
<dbReference type="Gene3D" id="3.40.50.10860">
    <property type="entry name" value="Leucine Dehydrogenase, chain A, domain 1"/>
    <property type="match status" value="1"/>
</dbReference>
<dbReference type="Gene3D" id="3.40.50.720">
    <property type="entry name" value="NAD(P)-binding Rossmann-like Domain"/>
    <property type="match status" value="1"/>
</dbReference>
<dbReference type="HAMAP" id="MF_00222">
    <property type="entry name" value="Shikimate_DH_AroE"/>
    <property type="match status" value="1"/>
</dbReference>
<dbReference type="InterPro" id="IPR046346">
    <property type="entry name" value="Aminoacid_DH-like_N_sf"/>
</dbReference>
<dbReference type="InterPro" id="IPR036291">
    <property type="entry name" value="NAD(P)-bd_dom_sf"/>
</dbReference>
<dbReference type="InterPro" id="IPR041121">
    <property type="entry name" value="SDH_C"/>
</dbReference>
<dbReference type="InterPro" id="IPR011342">
    <property type="entry name" value="Shikimate_DH"/>
</dbReference>
<dbReference type="InterPro" id="IPR013708">
    <property type="entry name" value="Shikimate_DH-bd_N"/>
</dbReference>
<dbReference type="InterPro" id="IPR022893">
    <property type="entry name" value="Shikimate_DH_fam"/>
</dbReference>
<dbReference type="NCBIfam" id="TIGR00507">
    <property type="entry name" value="aroE"/>
    <property type="match status" value="1"/>
</dbReference>
<dbReference type="NCBIfam" id="NF001319">
    <property type="entry name" value="PRK00258.3-3"/>
    <property type="match status" value="1"/>
</dbReference>
<dbReference type="PANTHER" id="PTHR21089:SF1">
    <property type="entry name" value="BIFUNCTIONAL 3-DEHYDROQUINATE DEHYDRATASE_SHIKIMATE DEHYDROGENASE, CHLOROPLASTIC"/>
    <property type="match status" value="1"/>
</dbReference>
<dbReference type="PANTHER" id="PTHR21089">
    <property type="entry name" value="SHIKIMATE DEHYDROGENASE"/>
    <property type="match status" value="1"/>
</dbReference>
<dbReference type="Pfam" id="PF18317">
    <property type="entry name" value="SDH_C"/>
    <property type="match status" value="1"/>
</dbReference>
<dbReference type="Pfam" id="PF08501">
    <property type="entry name" value="Shikimate_dh_N"/>
    <property type="match status" value="1"/>
</dbReference>
<dbReference type="SUPFAM" id="SSF53223">
    <property type="entry name" value="Aminoacid dehydrogenase-like, N-terminal domain"/>
    <property type="match status" value="1"/>
</dbReference>
<dbReference type="SUPFAM" id="SSF51735">
    <property type="entry name" value="NAD(P)-binding Rossmann-fold domains"/>
    <property type="match status" value="1"/>
</dbReference>
<name>AROE_STRPD</name>
<sequence length="292" mass="31288">MSERLSGHTLLVSLLATPIRHSLSPKMHNEAYAKLGLDYAYLAFEVGTEQLADAVQGIRALGIRGSNVSMPNKEAILPLLDDLSPAAELVGAVNTVVNKDGKGHLVGHITDGIGALRALADEGVSVKNKIITLAGVGGAGKAIAVQLAFDGAKEVRLFNRQATRLSSVQKLVTKLNQLTRTKVTLQDLEDQTAFKEAIRESHLFIDATSVGMKPLENLSLITDPELIRPDLVVFDIVYSPAETKLLAFARQHGAQKVINGLGMVLYQGAEAFKLIIGQDMPVDAIKPLLGDE</sequence>
<organism>
    <name type="scientific">Streptococcus pyogenes serotype M2 (strain MGAS10270)</name>
    <dbReference type="NCBI Taxonomy" id="370552"/>
    <lineage>
        <taxon>Bacteria</taxon>
        <taxon>Bacillati</taxon>
        <taxon>Bacillota</taxon>
        <taxon>Bacilli</taxon>
        <taxon>Lactobacillales</taxon>
        <taxon>Streptococcaceae</taxon>
        <taxon>Streptococcus</taxon>
    </lineage>
</organism>
<proteinExistence type="inferred from homology"/>
<gene>
    <name evidence="1" type="primary">aroE</name>
    <name type="ordered locus">MGAS10270_Spy1418</name>
</gene>